<organism>
    <name type="scientific">Symbiobacterium thermophilum (strain DSM 24528 / JCM 14929 / IAM 14863 / T)</name>
    <dbReference type="NCBI Taxonomy" id="292459"/>
    <lineage>
        <taxon>Bacteria</taxon>
        <taxon>Bacillati</taxon>
        <taxon>Bacillota</taxon>
        <taxon>Clostridia</taxon>
        <taxon>Eubacteriales</taxon>
        <taxon>Symbiobacteriaceae</taxon>
        <taxon>Symbiobacterium</taxon>
    </lineage>
</organism>
<name>RF1_SYMTH</name>
<keyword id="KW-0963">Cytoplasm</keyword>
<keyword id="KW-0488">Methylation</keyword>
<keyword id="KW-0648">Protein biosynthesis</keyword>
<keyword id="KW-1185">Reference proteome</keyword>
<dbReference type="EMBL" id="AP006840">
    <property type="protein sequence ID" value="BAD39058.1"/>
    <property type="molecule type" value="Genomic_DNA"/>
</dbReference>
<dbReference type="RefSeq" id="WP_011194208.1">
    <property type="nucleotide sequence ID" value="NC_006177.1"/>
</dbReference>
<dbReference type="SMR" id="Q67TD5"/>
<dbReference type="STRING" id="292459.STH73"/>
<dbReference type="KEGG" id="sth:STH73"/>
<dbReference type="eggNOG" id="COG0216">
    <property type="taxonomic scope" value="Bacteria"/>
</dbReference>
<dbReference type="HOGENOM" id="CLU_036856_0_1_9"/>
<dbReference type="OrthoDB" id="9806673at2"/>
<dbReference type="Proteomes" id="UP000000417">
    <property type="component" value="Chromosome"/>
</dbReference>
<dbReference type="GO" id="GO:0005737">
    <property type="term" value="C:cytoplasm"/>
    <property type="evidence" value="ECO:0007669"/>
    <property type="project" value="UniProtKB-SubCell"/>
</dbReference>
<dbReference type="GO" id="GO:0016149">
    <property type="term" value="F:translation release factor activity, codon specific"/>
    <property type="evidence" value="ECO:0007669"/>
    <property type="project" value="UniProtKB-UniRule"/>
</dbReference>
<dbReference type="FunFam" id="3.30.160.20:FF:000004">
    <property type="entry name" value="Peptide chain release factor 1"/>
    <property type="match status" value="1"/>
</dbReference>
<dbReference type="FunFam" id="3.30.70.1660:FF:000002">
    <property type="entry name" value="Peptide chain release factor 1"/>
    <property type="match status" value="1"/>
</dbReference>
<dbReference type="FunFam" id="3.30.70.1660:FF:000004">
    <property type="entry name" value="Peptide chain release factor 1"/>
    <property type="match status" value="1"/>
</dbReference>
<dbReference type="Gene3D" id="3.30.160.20">
    <property type="match status" value="1"/>
</dbReference>
<dbReference type="Gene3D" id="3.30.70.1660">
    <property type="match status" value="1"/>
</dbReference>
<dbReference type="Gene3D" id="6.10.140.1950">
    <property type="match status" value="1"/>
</dbReference>
<dbReference type="HAMAP" id="MF_00093">
    <property type="entry name" value="Rel_fac_1"/>
    <property type="match status" value="1"/>
</dbReference>
<dbReference type="InterPro" id="IPR005139">
    <property type="entry name" value="PCRF"/>
</dbReference>
<dbReference type="InterPro" id="IPR000352">
    <property type="entry name" value="Pep_chain_release_fac_I"/>
</dbReference>
<dbReference type="InterPro" id="IPR045853">
    <property type="entry name" value="Pep_chain_release_fac_I_sf"/>
</dbReference>
<dbReference type="InterPro" id="IPR050057">
    <property type="entry name" value="Prokaryotic/Mito_RF"/>
</dbReference>
<dbReference type="InterPro" id="IPR004373">
    <property type="entry name" value="RF-1"/>
</dbReference>
<dbReference type="NCBIfam" id="TIGR00019">
    <property type="entry name" value="prfA"/>
    <property type="match status" value="1"/>
</dbReference>
<dbReference type="NCBIfam" id="NF001859">
    <property type="entry name" value="PRK00591.1"/>
    <property type="match status" value="1"/>
</dbReference>
<dbReference type="PANTHER" id="PTHR43804">
    <property type="entry name" value="LD18447P"/>
    <property type="match status" value="1"/>
</dbReference>
<dbReference type="PANTHER" id="PTHR43804:SF7">
    <property type="entry name" value="LD18447P"/>
    <property type="match status" value="1"/>
</dbReference>
<dbReference type="Pfam" id="PF03462">
    <property type="entry name" value="PCRF"/>
    <property type="match status" value="1"/>
</dbReference>
<dbReference type="Pfam" id="PF00472">
    <property type="entry name" value="RF-1"/>
    <property type="match status" value="1"/>
</dbReference>
<dbReference type="SMART" id="SM00937">
    <property type="entry name" value="PCRF"/>
    <property type="match status" value="1"/>
</dbReference>
<dbReference type="SUPFAM" id="SSF75620">
    <property type="entry name" value="Release factor"/>
    <property type="match status" value="1"/>
</dbReference>
<dbReference type="PROSITE" id="PS00745">
    <property type="entry name" value="RF_PROK_I"/>
    <property type="match status" value="1"/>
</dbReference>
<gene>
    <name evidence="1" type="primary">prfA</name>
    <name type="ordered locus">STH73</name>
</gene>
<reference key="1">
    <citation type="journal article" date="2004" name="Nucleic Acids Res.">
        <title>Genome sequence of Symbiobacterium thermophilum, an uncultivable bacterium that depends on microbial commensalism.</title>
        <authorList>
            <person name="Ueda K."/>
            <person name="Yamashita A."/>
            <person name="Ishikawa J."/>
            <person name="Shimada M."/>
            <person name="Watsuji T."/>
            <person name="Morimura K."/>
            <person name="Ikeda H."/>
            <person name="Hattori M."/>
            <person name="Beppu T."/>
        </authorList>
    </citation>
    <scope>NUCLEOTIDE SEQUENCE [LARGE SCALE GENOMIC DNA]</scope>
    <source>
        <strain>DSM 24528 / JCM 14929 / IAM 14863 / T</strain>
    </source>
</reference>
<evidence type="ECO:0000255" key="1">
    <source>
        <dbReference type="HAMAP-Rule" id="MF_00093"/>
    </source>
</evidence>
<feature type="chain" id="PRO_0000263371" description="Peptide chain release factor 1">
    <location>
        <begin position="1"/>
        <end position="356"/>
    </location>
</feature>
<feature type="modified residue" description="N5-methylglutamine" evidence="1">
    <location>
        <position position="233"/>
    </location>
</feature>
<proteinExistence type="inferred from homology"/>
<accession>Q67TD5</accession>
<comment type="function">
    <text evidence="1">Peptide chain release factor 1 directs the termination of translation in response to the peptide chain termination codons UAG and UAA.</text>
</comment>
<comment type="subcellular location">
    <subcellularLocation>
        <location evidence="1">Cytoplasm</location>
    </subcellularLocation>
</comment>
<comment type="PTM">
    <text evidence="1">Methylated by PrmC. Methylation increases the termination efficiency of RF1.</text>
</comment>
<comment type="similarity">
    <text evidence="1">Belongs to the prokaryotic/mitochondrial release factor family.</text>
</comment>
<protein>
    <recommendedName>
        <fullName evidence="1">Peptide chain release factor 1</fullName>
        <shortName evidence="1">RF-1</shortName>
    </recommendedName>
</protein>
<sequence>MKQKLEGVVQRYEDLTYKLGDPSVINNPTEYRQVAREHNRLGPIVEKFRAYQKTERELDDVLEMLEGPLDPEERALFNQELRDLKEKLQTLSDELRILLLPRDPNDDKNVIMEIRAGAGGDEASLFAAELFRMYTRLAERHKWKTEVLSISENEAGGIKEVLFQINAEGAYSRLKYEGGVHRVQRVPVTESQGRIHTSTVTVAVMPEMEEVDIEIKPEDLKIEVQRAGGAGGQHVNKTESAVRMTHLPTGIVVYCADERSQMQNREKALRVLRARVADYYAQQAKSEEEQLRRAQVGTGERSEKIRTYNFPQDRVTDHRIGLTVHNIAAVMDGEIDHIIDALAQHEQAALLAREEA</sequence>